<name>MURG_BRUA2</name>
<comment type="function">
    <text evidence="1">Cell wall formation. Catalyzes the transfer of a GlcNAc subunit on undecaprenyl-pyrophosphoryl-MurNAc-pentapeptide (lipid intermediate I) to form undecaprenyl-pyrophosphoryl-MurNAc-(pentapeptide)GlcNAc (lipid intermediate II).</text>
</comment>
<comment type="catalytic activity">
    <reaction evidence="1">
        <text>di-trans,octa-cis-undecaprenyl diphospho-N-acetyl-alpha-D-muramoyl-L-alanyl-D-glutamyl-meso-2,6-diaminopimeloyl-D-alanyl-D-alanine + UDP-N-acetyl-alpha-D-glucosamine = di-trans,octa-cis-undecaprenyl diphospho-[N-acetyl-alpha-D-glucosaminyl-(1-&gt;4)]-N-acetyl-alpha-D-muramoyl-L-alanyl-D-glutamyl-meso-2,6-diaminopimeloyl-D-alanyl-D-alanine + UDP + H(+)</text>
        <dbReference type="Rhea" id="RHEA:31227"/>
        <dbReference type="ChEBI" id="CHEBI:15378"/>
        <dbReference type="ChEBI" id="CHEBI:57705"/>
        <dbReference type="ChEBI" id="CHEBI:58223"/>
        <dbReference type="ChEBI" id="CHEBI:61387"/>
        <dbReference type="ChEBI" id="CHEBI:61388"/>
        <dbReference type="EC" id="2.4.1.227"/>
    </reaction>
</comment>
<comment type="pathway">
    <text evidence="1">Cell wall biogenesis; peptidoglycan biosynthesis.</text>
</comment>
<comment type="subcellular location">
    <subcellularLocation>
        <location evidence="1">Cell inner membrane</location>
        <topology evidence="1">Peripheral membrane protein</topology>
        <orientation evidence="1">Cytoplasmic side</orientation>
    </subcellularLocation>
</comment>
<comment type="similarity">
    <text evidence="1">Belongs to the glycosyltransferase 28 family. MurG subfamily.</text>
</comment>
<evidence type="ECO:0000255" key="1">
    <source>
        <dbReference type="HAMAP-Rule" id="MF_00033"/>
    </source>
</evidence>
<gene>
    <name evidence="1" type="primary">murG</name>
    <name type="ordered locus">BAB1_1450</name>
</gene>
<dbReference type="EC" id="2.4.1.227" evidence="1"/>
<dbReference type="EMBL" id="AM040264">
    <property type="protein sequence ID" value="CAJ11406.1"/>
    <property type="molecule type" value="Genomic_DNA"/>
</dbReference>
<dbReference type="RefSeq" id="WP_002964539.1">
    <property type="nucleotide sequence ID" value="NZ_KN046823.1"/>
</dbReference>
<dbReference type="SMR" id="Q2YLY5"/>
<dbReference type="STRING" id="359391.BAB1_1450"/>
<dbReference type="CAZy" id="GT28">
    <property type="family name" value="Glycosyltransferase Family 28"/>
</dbReference>
<dbReference type="GeneID" id="93016271"/>
<dbReference type="KEGG" id="bmf:BAB1_1450"/>
<dbReference type="PATRIC" id="fig|359391.11.peg.901"/>
<dbReference type="HOGENOM" id="CLU_037404_2_1_5"/>
<dbReference type="PhylomeDB" id="Q2YLY5"/>
<dbReference type="UniPathway" id="UPA00219"/>
<dbReference type="Proteomes" id="UP000002719">
    <property type="component" value="Chromosome I"/>
</dbReference>
<dbReference type="GO" id="GO:0005886">
    <property type="term" value="C:plasma membrane"/>
    <property type="evidence" value="ECO:0007669"/>
    <property type="project" value="UniProtKB-SubCell"/>
</dbReference>
<dbReference type="GO" id="GO:0051991">
    <property type="term" value="F:UDP-N-acetyl-D-glucosamine:N-acetylmuramoyl-L-alanyl-D-glutamyl-meso-2,6-diaminopimelyl-D-alanyl-D-alanine-diphosphoundecaprenol 4-beta-N-acetylglucosaminlytransferase activity"/>
    <property type="evidence" value="ECO:0007669"/>
    <property type="project" value="RHEA"/>
</dbReference>
<dbReference type="GO" id="GO:0050511">
    <property type="term" value="F:undecaprenyldiphospho-muramoylpentapeptide beta-N-acetylglucosaminyltransferase activity"/>
    <property type="evidence" value="ECO:0007669"/>
    <property type="project" value="UniProtKB-UniRule"/>
</dbReference>
<dbReference type="GO" id="GO:0005975">
    <property type="term" value="P:carbohydrate metabolic process"/>
    <property type="evidence" value="ECO:0007669"/>
    <property type="project" value="InterPro"/>
</dbReference>
<dbReference type="GO" id="GO:0051301">
    <property type="term" value="P:cell division"/>
    <property type="evidence" value="ECO:0007669"/>
    <property type="project" value="UniProtKB-KW"/>
</dbReference>
<dbReference type="GO" id="GO:0071555">
    <property type="term" value="P:cell wall organization"/>
    <property type="evidence" value="ECO:0007669"/>
    <property type="project" value="UniProtKB-KW"/>
</dbReference>
<dbReference type="GO" id="GO:0030259">
    <property type="term" value="P:lipid glycosylation"/>
    <property type="evidence" value="ECO:0007669"/>
    <property type="project" value="UniProtKB-UniRule"/>
</dbReference>
<dbReference type="GO" id="GO:0009252">
    <property type="term" value="P:peptidoglycan biosynthetic process"/>
    <property type="evidence" value="ECO:0007669"/>
    <property type="project" value="UniProtKB-UniRule"/>
</dbReference>
<dbReference type="GO" id="GO:0008360">
    <property type="term" value="P:regulation of cell shape"/>
    <property type="evidence" value="ECO:0007669"/>
    <property type="project" value="UniProtKB-KW"/>
</dbReference>
<dbReference type="CDD" id="cd03785">
    <property type="entry name" value="GT28_MurG"/>
    <property type="match status" value="1"/>
</dbReference>
<dbReference type="Gene3D" id="3.40.50.2000">
    <property type="entry name" value="Glycogen Phosphorylase B"/>
    <property type="match status" value="2"/>
</dbReference>
<dbReference type="HAMAP" id="MF_00033">
    <property type="entry name" value="MurG"/>
    <property type="match status" value="1"/>
</dbReference>
<dbReference type="InterPro" id="IPR006009">
    <property type="entry name" value="GlcNAc_MurG"/>
</dbReference>
<dbReference type="InterPro" id="IPR007235">
    <property type="entry name" value="Glyco_trans_28_C"/>
</dbReference>
<dbReference type="InterPro" id="IPR004276">
    <property type="entry name" value="GlycoTrans_28_N"/>
</dbReference>
<dbReference type="NCBIfam" id="TIGR01133">
    <property type="entry name" value="murG"/>
    <property type="match status" value="1"/>
</dbReference>
<dbReference type="PANTHER" id="PTHR21015:SF22">
    <property type="entry name" value="GLYCOSYLTRANSFERASE"/>
    <property type="match status" value="1"/>
</dbReference>
<dbReference type="PANTHER" id="PTHR21015">
    <property type="entry name" value="UDP-N-ACETYLGLUCOSAMINE--N-ACETYLMURAMYL-(PENTAPEPTIDE) PYROPHOSPHORYL-UNDECAPRENOL N-ACETYLGLUCOSAMINE TRANSFERASE 1"/>
    <property type="match status" value="1"/>
</dbReference>
<dbReference type="Pfam" id="PF04101">
    <property type="entry name" value="Glyco_tran_28_C"/>
    <property type="match status" value="1"/>
</dbReference>
<dbReference type="Pfam" id="PF03033">
    <property type="entry name" value="Glyco_transf_28"/>
    <property type="match status" value="1"/>
</dbReference>
<dbReference type="SUPFAM" id="SSF53756">
    <property type="entry name" value="UDP-Glycosyltransferase/glycogen phosphorylase"/>
    <property type="match status" value="1"/>
</dbReference>
<proteinExistence type="inferred from homology"/>
<protein>
    <recommendedName>
        <fullName evidence="1">UDP-N-acetylglucosamine--N-acetylmuramyl-(pentapeptide) pyrophosphoryl-undecaprenol N-acetylglucosamine transferase</fullName>
        <ecNumber evidence="1">2.4.1.227</ecNumber>
    </recommendedName>
    <alternativeName>
        <fullName evidence="1">Undecaprenyl-PP-MurNAc-pentapeptide-UDPGlcNAc GlcNAc transferase</fullName>
    </alternativeName>
</protein>
<feature type="chain" id="PRO_0000315075" description="UDP-N-acetylglucosamine--N-acetylmuramyl-(pentapeptide) pyrophosphoryl-undecaprenol N-acetylglucosamine transferase">
    <location>
        <begin position="1"/>
        <end position="379"/>
    </location>
</feature>
<feature type="binding site" evidence="1">
    <location>
        <begin position="17"/>
        <end position="19"/>
    </location>
    <ligand>
        <name>UDP-N-acetyl-alpha-D-glucosamine</name>
        <dbReference type="ChEBI" id="CHEBI:57705"/>
    </ligand>
</feature>
<feature type="binding site" evidence="1">
    <location>
        <position position="128"/>
    </location>
    <ligand>
        <name>UDP-N-acetyl-alpha-D-glucosamine</name>
        <dbReference type="ChEBI" id="CHEBI:57705"/>
    </ligand>
</feature>
<feature type="binding site" evidence="1">
    <location>
        <position position="169"/>
    </location>
    <ligand>
        <name>UDP-N-acetyl-alpha-D-glucosamine</name>
        <dbReference type="ChEBI" id="CHEBI:57705"/>
    </ligand>
</feature>
<feature type="binding site" evidence="1">
    <location>
        <position position="197"/>
    </location>
    <ligand>
        <name>UDP-N-acetyl-alpha-D-glucosamine</name>
        <dbReference type="ChEBI" id="CHEBI:57705"/>
    </ligand>
</feature>
<feature type="binding site" evidence="1">
    <location>
        <position position="298"/>
    </location>
    <ligand>
        <name>UDP-N-acetyl-alpha-D-glucosamine</name>
        <dbReference type="ChEBI" id="CHEBI:57705"/>
    </ligand>
</feature>
<organism>
    <name type="scientific">Brucella abortus (strain 2308)</name>
    <dbReference type="NCBI Taxonomy" id="359391"/>
    <lineage>
        <taxon>Bacteria</taxon>
        <taxon>Pseudomonadati</taxon>
        <taxon>Pseudomonadota</taxon>
        <taxon>Alphaproteobacteria</taxon>
        <taxon>Hyphomicrobiales</taxon>
        <taxon>Brucellaceae</taxon>
        <taxon>Brucella/Ochrobactrum group</taxon>
        <taxon>Brucella</taxon>
    </lineage>
</organism>
<accession>Q2YLY5</accession>
<sequence length="379" mass="40198">MDNLANQGVIVLAAGGTGGHLFPAEALAHELRARGWDVHLATDARAQRFVGAFAQDHVHVIRSATIAGRNPVALLKTFWSLWQGNLDSRKLFRRLKPKLVVGFGGYPTLPPLYAASNMGIPTLIHEQNAVMGRANKGLAGRVKAIAGGFLPENSGAYAAKTVITGNPVRSPVLVAAATPYTPAGKDDRFRLLVFGGSQGAQFFSQAIPAAVALLPEHERARLLITQQARKEDEASARQAYEKLGVPADVAPFFNDMPARMADAHFVIARSGASTVSEITVIGRPAMLVPFPHALDHDQAANAAALAAAGGAEVVRQADLSPQRLAEMLQSAMNEPERLEQQAKAAKSVGKPDAARLLADLAEAIASGKTVQEFKEGNRP</sequence>
<reference key="1">
    <citation type="journal article" date="2005" name="Infect. Immun.">
        <title>Whole-genome analyses of speciation events in pathogenic Brucellae.</title>
        <authorList>
            <person name="Chain P.S."/>
            <person name="Comerci D.J."/>
            <person name="Tolmasky M.E."/>
            <person name="Larimer F.W."/>
            <person name="Malfatti S.A."/>
            <person name="Vergez L.M."/>
            <person name="Aguero F."/>
            <person name="Land M.L."/>
            <person name="Ugalde R.A."/>
            <person name="Garcia E."/>
        </authorList>
    </citation>
    <scope>NUCLEOTIDE SEQUENCE [LARGE SCALE GENOMIC DNA]</scope>
    <source>
        <strain>2308</strain>
    </source>
</reference>
<keyword id="KW-0131">Cell cycle</keyword>
<keyword id="KW-0132">Cell division</keyword>
<keyword id="KW-0997">Cell inner membrane</keyword>
<keyword id="KW-1003">Cell membrane</keyword>
<keyword id="KW-0133">Cell shape</keyword>
<keyword id="KW-0961">Cell wall biogenesis/degradation</keyword>
<keyword id="KW-0328">Glycosyltransferase</keyword>
<keyword id="KW-0472">Membrane</keyword>
<keyword id="KW-0573">Peptidoglycan synthesis</keyword>
<keyword id="KW-1185">Reference proteome</keyword>
<keyword id="KW-0808">Transferase</keyword>